<accession>E7KCH3</accession>
<reference key="1">
    <citation type="journal article" date="2011" name="PLoS Genet.">
        <title>Whole-genome comparison reveals novel genetic elements that characterize the genome of industrial strains of Saccharomyces cerevisiae.</title>
        <authorList>
            <person name="Borneman A.R."/>
            <person name="Desany B.A."/>
            <person name="Riches D."/>
            <person name="Affourtit J.P."/>
            <person name="Forgan A.H."/>
            <person name="Pretorius I.S."/>
            <person name="Egholm M."/>
            <person name="Chambers P.J."/>
        </authorList>
    </citation>
    <scope>NUCLEOTIDE SEQUENCE [LARGE SCALE GENOMIC DNA]</scope>
    <source>
        <strain>AWRI796</strain>
    </source>
</reference>
<sequence length="218" mass="24442">MVTGISEENDDEETFSAVHSSTPSINSQSYAIPITEEMSSSFHDSISTTSNSSGSFDSDGSNVSDVVEQNEMDNESNVDEDLFLDNDIPQSSNLLPTDAQDPGPIFDVSRYIFDSLKQSIDSADFSEALSLQTKTSAVINSKSLELKQYIDEMKSRLTQLQEKFENGEATSKKIKRDLETSRKNIDYLNAALRVDFPIEFNQAREKILERRLNEDHDC</sequence>
<keyword id="KW-0175">Coiled coil</keyword>
<keyword id="KW-0967">Endosome</keyword>
<keyword id="KW-0813">Transport</keyword>
<name>KXD1_YEASA</name>
<dbReference type="EMBL" id="ADVS01000023">
    <property type="protein sequence ID" value="EGA75071.1"/>
    <property type="molecule type" value="Genomic_DNA"/>
</dbReference>
<dbReference type="SMR" id="E7KCH3"/>
<dbReference type="HOGENOM" id="CLU_099155_0_0_1"/>
<dbReference type="OMA" id="TPMFDTS"/>
<dbReference type="OrthoDB" id="4089816at2759"/>
<dbReference type="GO" id="GO:0031083">
    <property type="term" value="C:BLOC-1 complex"/>
    <property type="evidence" value="ECO:0007669"/>
    <property type="project" value="TreeGrafter"/>
</dbReference>
<dbReference type="GO" id="GO:0005768">
    <property type="term" value="C:endosome"/>
    <property type="evidence" value="ECO:0007669"/>
    <property type="project" value="UniProtKB-SubCell"/>
</dbReference>
<dbReference type="GO" id="GO:0007032">
    <property type="term" value="P:endosome organization"/>
    <property type="evidence" value="ECO:0007669"/>
    <property type="project" value="TreeGrafter"/>
</dbReference>
<dbReference type="GO" id="GO:0032880">
    <property type="term" value="P:regulation of protein localization"/>
    <property type="evidence" value="ECO:0007669"/>
    <property type="project" value="TreeGrafter"/>
</dbReference>
<dbReference type="InterPro" id="IPR051390">
    <property type="entry name" value="BLOC-1_subunit_KXD1"/>
</dbReference>
<dbReference type="InterPro" id="IPR019371">
    <property type="entry name" value="KxDL_dom"/>
</dbReference>
<dbReference type="PANTHER" id="PTHR37787">
    <property type="entry name" value="BIOGENESIS OF LYSOSOME-RELATED ORGANELLES COMPLEX 1 SUBUNIT KXD1"/>
    <property type="match status" value="1"/>
</dbReference>
<dbReference type="PANTHER" id="PTHR37787:SF1">
    <property type="entry name" value="BIOGENESIS OF LYSOSOME-RELATED ORGANELLES COMPLEX 1 SUBUNIT KXD1"/>
    <property type="match status" value="1"/>
</dbReference>
<dbReference type="Pfam" id="PF10241">
    <property type="entry name" value="KxDL"/>
    <property type="match status" value="1"/>
</dbReference>
<gene>
    <name type="primary">KXD1</name>
    <name type="ORF">AWRI796_1718</name>
</gene>
<proteinExistence type="inferred from homology"/>
<feature type="chain" id="PRO_0000410674" description="Biogenesis of lysosome-related organelles complex 1 subunit KXD1">
    <location>
        <begin position="1"/>
        <end position="218"/>
    </location>
</feature>
<feature type="region of interest" description="Disordered" evidence="3">
    <location>
        <begin position="1"/>
        <end position="65"/>
    </location>
</feature>
<feature type="coiled-coil region" evidence="2">
    <location>
        <begin position="142"/>
        <end position="192"/>
    </location>
</feature>
<feature type="compositionally biased region" description="Polar residues" evidence="3">
    <location>
        <begin position="17"/>
        <end position="30"/>
    </location>
</feature>
<feature type="compositionally biased region" description="Low complexity" evidence="3">
    <location>
        <begin position="39"/>
        <end position="65"/>
    </location>
</feature>
<comment type="function">
    <text evidence="1">Component of the biogenesis of lysosome-related organelles complex-1 (BLOC-1) involved in endosomal cargo sorting.</text>
</comment>
<comment type="subunit">
    <text evidence="1">Component of the biogenesis of lysosome-related organelles complex-1 (BLOC-1) composed of at least BLI1, BLS1, CNL1, KXD1, SNN1 and VAB2.</text>
</comment>
<comment type="subcellular location">
    <subcellularLocation>
        <location evidence="1">Endosome</location>
    </subcellularLocation>
</comment>
<comment type="similarity">
    <text evidence="4">Belongs to the KXD1 family.</text>
</comment>
<protein>
    <recommendedName>
        <fullName>Biogenesis of lysosome-related organelles complex 1 subunit KXD1</fullName>
        <shortName>BLOC-1 subunit KXD1</shortName>
    </recommendedName>
    <alternativeName>
        <fullName>KxDL homolog</fullName>
    </alternativeName>
</protein>
<evidence type="ECO:0000250" key="1"/>
<evidence type="ECO:0000255" key="2"/>
<evidence type="ECO:0000256" key="3">
    <source>
        <dbReference type="SAM" id="MobiDB-lite"/>
    </source>
</evidence>
<evidence type="ECO:0000305" key="4"/>
<organism>
    <name type="scientific">Saccharomyces cerevisiae (strain AWRI796)</name>
    <name type="common">Baker's yeast</name>
    <dbReference type="NCBI Taxonomy" id="764097"/>
    <lineage>
        <taxon>Eukaryota</taxon>
        <taxon>Fungi</taxon>
        <taxon>Dikarya</taxon>
        <taxon>Ascomycota</taxon>
        <taxon>Saccharomycotina</taxon>
        <taxon>Saccharomycetes</taxon>
        <taxon>Saccharomycetales</taxon>
        <taxon>Saccharomycetaceae</taxon>
        <taxon>Saccharomyces</taxon>
    </lineage>
</organism>